<name>NU301_CAEEL</name>
<feature type="chain" id="PRO_0000249321" description="Nucleosome-remodeling factor subunit NURF301-like">
    <location>
        <begin position="1"/>
        <end position="2194"/>
    </location>
</feature>
<feature type="domain" description="DDT 1" evidence="3">
    <location>
        <begin position="196"/>
        <end position="256"/>
    </location>
</feature>
<feature type="domain" description="DDT 2" evidence="3">
    <location>
        <begin position="341"/>
        <end position="396"/>
    </location>
</feature>
<feature type="domain" description="DDT 3" evidence="3">
    <location>
        <begin position="1883"/>
        <end position="1953"/>
    </location>
</feature>
<feature type="domain" description="DDT 4" evidence="3">
    <location>
        <begin position="1948"/>
        <end position="2014"/>
    </location>
</feature>
<feature type="domain" description="Bromo" evidence="2">
    <location>
        <begin position="2030"/>
        <end position="2134"/>
    </location>
</feature>
<feature type="zinc finger region" description="PHD-type 1" evidence="4">
    <location>
        <begin position="347"/>
        <end position="392"/>
    </location>
</feature>
<feature type="zinc finger region" description="PHD-type 2" evidence="4">
    <location>
        <begin position="1899"/>
        <end position="1950"/>
    </location>
</feature>
<feature type="zinc finger region" description="PHD-type 3" evidence="4">
    <location>
        <begin position="1959"/>
        <end position="2010"/>
    </location>
</feature>
<feature type="region of interest" description="Disordered" evidence="5">
    <location>
        <begin position="1"/>
        <end position="137"/>
    </location>
</feature>
<feature type="region of interest" description="Disordered" evidence="5">
    <location>
        <begin position="1091"/>
        <end position="1122"/>
    </location>
</feature>
<feature type="region of interest" description="Disordered" evidence="5">
    <location>
        <begin position="1158"/>
        <end position="1255"/>
    </location>
</feature>
<feature type="region of interest" description="Disordered" evidence="5">
    <location>
        <begin position="1413"/>
        <end position="1433"/>
    </location>
</feature>
<feature type="region of interest" description="Disordered" evidence="5">
    <location>
        <begin position="1657"/>
        <end position="1701"/>
    </location>
</feature>
<feature type="region of interest" description="Disordered" evidence="5">
    <location>
        <begin position="1834"/>
        <end position="1888"/>
    </location>
</feature>
<feature type="coiled-coil region" evidence="1">
    <location>
        <begin position="1151"/>
        <end position="1187"/>
    </location>
</feature>
<feature type="compositionally biased region" description="Basic residues" evidence="5">
    <location>
        <begin position="1"/>
        <end position="12"/>
    </location>
</feature>
<feature type="compositionally biased region" description="Basic and acidic residues" evidence="5">
    <location>
        <begin position="60"/>
        <end position="79"/>
    </location>
</feature>
<feature type="compositionally biased region" description="Polar residues" evidence="5">
    <location>
        <begin position="80"/>
        <end position="93"/>
    </location>
</feature>
<feature type="compositionally biased region" description="Basic residues" evidence="5">
    <location>
        <begin position="94"/>
        <end position="112"/>
    </location>
</feature>
<feature type="compositionally biased region" description="Acidic residues" evidence="5">
    <location>
        <begin position="118"/>
        <end position="137"/>
    </location>
</feature>
<feature type="compositionally biased region" description="Basic and acidic residues" evidence="5">
    <location>
        <begin position="1158"/>
        <end position="1179"/>
    </location>
</feature>
<feature type="compositionally biased region" description="Polar residues" evidence="5">
    <location>
        <begin position="1665"/>
        <end position="1684"/>
    </location>
</feature>
<feature type="compositionally biased region" description="Basic and acidic residues" evidence="5">
    <location>
        <begin position="1852"/>
        <end position="1861"/>
    </location>
</feature>
<feature type="splice variant" id="VSP_020410" description="In isoform e." evidence="7">
    <location>
        <begin position="1"/>
        <end position="1789"/>
    </location>
</feature>
<feature type="splice variant" id="VSP_020411" description="In isoform f." evidence="7">
    <location>
        <begin position="1"/>
        <end position="1676"/>
    </location>
</feature>
<feature type="splice variant" id="VSP_020413" description="In isoform d." evidence="7">
    <location>
        <begin position="1"/>
        <end position="1386"/>
    </location>
</feature>
<feature type="splice variant" id="VSP_020415" description="In isoform b." evidence="7">
    <original>EHRRLLAGRQKQKVTTYRDFMASRGYLD</original>
    <variation>FQAHYDMPDDATGFAVSTTTEQVPDEQQ</variation>
    <location>
        <begin position="1594"/>
        <end position="1621"/>
    </location>
</feature>
<feature type="splice variant" id="VSP_020418" description="In isoform b." evidence="7">
    <location>
        <begin position="1622"/>
        <end position="2194"/>
    </location>
</feature>
<feature type="splice variant" id="VSP_020420" description="In isoform f." evidence="7">
    <original>SITSSGDTQRAPPYVSNLLPSSNDSPDDKVIKQVLDVMFSQVCRWDRQYGWSKTHVKRARQKNDSDKMHLRKFRMNQRELLITDHMERLKKEINKRRTRMENEAEQQCGLLTPWRKARARPHR</original>
    <variation>MVLRTVILPTATYTAPSQYCPSTVLSNLTLSCPYQDQEADASLEISDFAEVLPKFESAEQDWNSFGYLLNEQPGTSSDKTTTPIKKITVFQKPVEPIGKGPRRRRRCADREISEL</variation>
    <location>
        <begin position="1677"/>
        <end position="1799"/>
    </location>
</feature>
<feature type="splice variant" id="VSP_044204" description="In isoform a." evidence="7">
    <original>H</original>
    <variation>QMFS</variation>
    <location>
        <position position="1745"/>
    </location>
</feature>
<feature type="splice variant" id="VSP_020421" description="In isoform e." evidence="7">
    <original>WRKARARPHR</original>
    <variation>MKALHVFFLP</variation>
    <location>
        <begin position="1790"/>
        <end position="1799"/>
    </location>
</feature>
<sequence length="2194" mass="252195">MAPPRGRSKRKHPSESGNSSIADSEDPSESTSSSRPRRSRLPKRYFDDGYSPPPTKKRAAQRETPSDAEEVEVKIEEISVRSTPASTPAPKSTSKARGRPKKNPTPPRRKSLKRQEEDIIYMDEDSEEEEESSDDEFMLNEDQVVQEEEEELNLTDIKIEKGLDEENKYCPWLDEDPASLPKLELPESSQDIPIPTASIMDAVEIYEILRSYHRTLRITPFTFEDFCAALISHNNSCIMAEVHMALLRNCLKSDDEEQTHYSVTETNNSVNIMIHHMDTLTYAEILRQYIEAYPFADASVRDAINVDNYPFVGYDAKLVVLLFMSYRFLYSSEFKKLVNNVGKFQNDENCRVCGKSSGRVVGCTQCEAAFHVECSHLKPFPEVLVCNICKKNSAVRGVLPPDEAVDREPLRSQPIGRDRYGRYYWFIVRRLVVQSLDETELYYYSTVPQLYQLLQKLDRTYYEKDLCDTIRLRIDEFLEQMALTVEMTSERREAALETMVKRQLIGYDFAEATTPQIYLHRDSMKRMASILRDCAQKGQVKQEVKLEEPVEGQSPVKCVQFVEDSILPESMIGIFDAKLINTFWSGGATQEELVEQFVDISDNFDAPSANLWRMGDEGNDQTFMTYYNYYSRNEMSESFLTRKKAADKKKYMASKFAQIDNFDWVVAKNRQFYGDASLHCKFIMWTLQQVIKNIPIDLMHRKWPEFAKGFDLEVSVADDYKKLVTCLLKLDCAVRKTIFMPQWWNGLGQTRLERITVDQRENFMKEQQRLKKIDADALTKDLDDSFVRVNYMKPKWPNTYILRQRGETYRNAGKGSMGGWAWVAAKYVEKWIQVPESPKLPLAVTVEEIKTESVSNRKARRLELLVSKITKKRQRSGGKSSKKPTFELTNGCYSPSCRSNPNRKCYSPMCRNGYLVSAKQAHDERKLEESGVLGEEKAWPIPEIQTFSTKRGGKSIFVLQKKILRQMIMGGGCQQVYMPGFSAGIKSNLLIWPYPAPRPTLDLCWKWQTLNARSLHAVALQLKIIWSSIKFNEFDPDDTHPDRRVVIDTPSHDERRRIIRHKEMPPYGQYERYEMEIEIIPLYDEPEEEDESWLSRNRGGSSEFSHRSSSARKKRPQRSLDNRRATAIRREWVDGVTLKVFEIKDYWKWIRAEAEKTAKRKLEATRKAQKAKEDEERRRIQQQQQRSVARIPVPMHSLIPSERNNVPYLGSQQQRRPNGNERGFLEKYNNSSSVSPQAHGYASTPPPGYHQPQPNIIRQAGYNQLPRKPTTSPFNFQSRPVATIPTTPQLRAAAGADGVVRAVMMTPGNKSTVNTNSTPYPQALNRQQYQLQRQQQQPAVRRLTNGYHFMDGTMRGGGRNPSVQMHQRLPQNRAALQRPFGESTTEMRRVTEAAIPDNDGDEQPPVIPRYDPTSNFDAQRAQQQHPQSRPVYSTPAQMIRTTQPGGVKHNVILMKASDGTQKMVLKPGQFPPGTVISTGQRVVPYRQPTAVQQRQLYTATPGTRVVRIPNANGGAPRQQDHQVMRRVVQASGPRAMEYMDDQGTPPPGQQVRYVLQGGNSGTPNVNPPKVSSRGGPRGGLTMQMVQQQQQHNPEHRRLLAGRQKQKVTTYRDFMASRGYLDTSKFMMQTKPTFLPFEFNEEEEREINEAIAREEAWMRQEEENKTSGYDSSGNPIRSITSSGDTQRAPPYVSNLLPSSNDSPDDKVIKQVLDVMFSQVCRWDRQYGWSKTHVKRARQKNDSDKMHLRKFRMNQRELLITDHMERLKKEINKRRTRMENEAEQQCGLLTPWRKARARPHRAAKPKAEVKKEVINPADITLGGDTYDYVKEQKPTESIATNVSRRRRTSANLSKSEDDRDKPESQSTAPKSKERRTSEPPASHVAFHTPGSATPHDINLSIEHCTCQKIFDASKLYIQCELCARWYHGDCVGVAEQTILGLEHWSCEECIEEQERVKDQPALYCVCQKPYDDTKFYVGCDSCQGWFHPECVGTTRAEAEQAADYNCPACTREAEGYESEASDVSGSSRVSVQLTRADYTHVFELLELLLEHRMSTPFRNPVDLNEFPDYEKFIKKPMDLSTITKKVERTEYLYLSQFVNDVNQMFENAKTYNPKGNAVFKCAETMQEVFDKKLIDVREQMTARQQMLLLATAQQQDPMSSIRKRVQSESQRTVDSLDIDSDQLLPLDANLMRLYDF</sequence>
<dbReference type="EMBL" id="Z81515">
    <property type="protein sequence ID" value="CAB04195.1"/>
    <property type="molecule type" value="Genomic_DNA"/>
</dbReference>
<dbReference type="EMBL" id="Z81515">
    <property type="protein sequence ID" value="CAB04197.3"/>
    <property type="molecule type" value="Genomic_DNA"/>
</dbReference>
<dbReference type="EMBL" id="Z81515">
    <property type="protein sequence ID" value="CAB04198.1"/>
    <property type="molecule type" value="Genomic_DNA"/>
</dbReference>
<dbReference type="EMBL" id="Z81515">
    <property type="protein sequence ID" value="CAB54234.4"/>
    <property type="molecule type" value="Genomic_DNA"/>
</dbReference>
<dbReference type="EMBL" id="Z81515">
    <property type="protein sequence ID" value="CAC42289.3"/>
    <property type="molecule type" value="Genomic_DNA"/>
</dbReference>
<dbReference type="EMBL" id="Z81515">
    <property type="protein sequence ID" value="CAH04722.2"/>
    <property type="molecule type" value="Genomic_DNA"/>
</dbReference>
<dbReference type="EMBL" id="Z81515">
    <property type="protein sequence ID" value="CAH60782.1"/>
    <property type="molecule type" value="Genomic_DNA"/>
</dbReference>
<dbReference type="EMBL" id="Z81515">
    <property type="protein sequence ID" value="CAQ16138.1"/>
    <property type="molecule type" value="Genomic_DNA"/>
</dbReference>
<dbReference type="PIR" id="T21430">
    <property type="entry name" value="T21430"/>
</dbReference>
<dbReference type="PIR" id="T21432">
    <property type="entry name" value="T21432"/>
</dbReference>
<dbReference type="PIR" id="T21433">
    <property type="entry name" value="T21433"/>
</dbReference>
<dbReference type="PIR" id="T21435">
    <property type="entry name" value="T21435"/>
</dbReference>
<dbReference type="RefSeq" id="NP_001022117.2">
    <molecule id="Q6BER5-1"/>
    <property type="nucleotide sequence ID" value="NM_001026946.4"/>
</dbReference>
<dbReference type="RefSeq" id="NP_001022118.2">
    <property type="nucleotide sequence ID" value="NM_001026947.5"/>
</dbReference>
<dbReference type="RefSeq" id="NP_001022119.1">
    <molecule id="Q6BER5-5"/>
    <property type="nucleotide sequence ID" value="NM_001026948.6"/>
</dbReference>
<dbReference type="RefSeq" id="NP_001022120.1">
    <molecule id="Q6BER5-6"/>
    <property type="nucleotide sequence ID" value="NM_001026949.5"/>
</dbReference>
<dbReference type="RefSeq" id="NP_001022121.1">
    <property type="nucleotide sequence ID" value="NM_001026950.3"/>
</dbReference>
<dbReference type="RefSeq" id="NP_001122607.1">
    <property type="nucleotide sequence ID" value="NM_001129135.2"/>
</dbReference>
<dbReference type="RefSeq" id="NP_001379249.1">
    <molecule id="Q6BER5-4"/>
    <property type="nucleotide sequence ID" value="NM_001393233.1"/>
</dbReference>
<dbReference type="RefSeq" id="NP_496994.3">
    <molecule id="Q6BER5-2"/>
    <property type="nucleotide sequence ID" value="NM_064593.4"/>
</dbReference>
<dbReference type="RefSeq" id="NP_496995.3">
    <molecule id="Q6BER5-3"/>
    <property type="nucleotide sequence ID" value="NM_064594.9"/>
</dbReference>
<dbReference type="SMR" id="Q6BER5"/>
<dbReference type="BioGRID" id="40379">
    <property type="interactions" value="14"/>
</dbReference>
<dbReference type="DIP" id="DIP-25937N"/>
<dbReference type="FunCoup" id="Q6BER5">
    <property type="interactions" value="3201"/>
</dbReference>
<dbReference type="IntAct" id="Q6BER5">
    <property type="interactions" value="8"/>
</dbReference>
<dbReference type="STRING" id="6239.F26H11.2a.1"/>
<dbReference type="PaxDb" id="6239-F26H11.2a"/>
<dbReference type="PeptideAtlas" id="Q6BER5"/>
<dbReference type="EnsemblMetazoa" id="F26H11.2a.1">
    <molecule id="Q6BER5-3"/>
    <property type="protein sequence ID" value="F26H11.2a.1"/>
    <property type="gene ID" value="WBGene00009180"/>
</dbReference>
<dbReference type="EnsemblMetazoa" id="F26H11.2b.1">
    <molecule id="Q6BER5-2"/>
    <property type="protein sequence ID" value="F26H11.2b.1"/>
    <property type="gene ID" value="WBGene00009180"/>
</dbReference>
<dbReference type="EnsemblMetazoa" id="F26H11.2c.1">
    <molecule id="Q6BER5-1"/>
    <property type="protein sequence ID" value="F26H11.2c.1"/>
    <property type="gene ID" value="WBGene00009180"/>
</dbReference>
<dbReference type="EnsemblMetazoa" id="F26H11.2d.1">
    <molecule id="Q6BER5-4"/>
    <property type="protein sequence ID" value="F26H11.2d.1"/>
    <property type="gene ID" value="WBGene00009180"/>
</dbReference>
<dbReference type="EnsemblMetazoa" id="F26H11.2d.2">
    <molecule id="Q6BER5-4"/>
    <property type="protein sequence ID" value="F26H11.2d.2"/>
    <property type="gene ID" value="WBGene00009180"/>
</dbReference>
<dbReference type="EnsemblMetazoa" id="F26H11.2e.1">
    <molecule id="Q6BER5-5"/>
    <property type="protein sequence ID" value="F26H11.2e.1"/>
    <property type="gene ID" value="WBGene00009180"/>
</dbReference>
<dbReference type="EnsemblMetazoa" id="F26H11.2f.1">
    <molecule id="Q6BER5-6"/>
    <property type="protein sequence ID" value="F26H11.2f.1"/>
    <property type="gene ID" value="WBGene00009180"/>
</dbReference>
<dbReference type="GeneID" id="175098"/>
<dbReference type="KEGG" id="cel:CELE_F26H11.2"/>
<dbReference type="UCSC" id="F26H11.2a">
    <property type="organism name" value="c. elegans"/>
</dbReference>
<dbReference type="AGR" id="WB:WBGene00009180"/>
<dbReference type="CTD" id="175098"/>
<dbReference type="WormBase" id="F26H11.2a">
    <molecule id="Q6BER5-3"/>
    <property type="protein sequence ID" value="CE46896"/>
    <property type="gene ID" value="WBGene00009180"/>
    <property type="gene designation" value="nurf-1"/>
</dbReference>
<dbReference type="WormBase" id="F26H11.2b">
    <molecule id="Q6BER5-2"/>
    <property type="protein sequence ID" value="CE46841"/>
    <property type="gene ID" value="WBGene00009180"/>
    <property type="gene designation" value="nurf-1"/>
</dbReference>
<dbReference type="WormBase" id="F26H11.2c">
    <molecule id="Q6BER5-1"/>
    <property type="protein sequence ID" value="CE47064"/>
    <property type="gene ID" value="WBGene00009180"/>
    <property type="gene designation" value="nurf-1"/>
</dbReference>
<dbReference type="WormBase" id="F26H11.2d">
    <molecule id="Q6BER5-4"/>
    <property type="protein sequence ID" value="CE42388"/>
    <property type="gene ID" value="WBGene00009180"/>
    <property type="gene designation" value="nurf-1"/>
</dbReference>
<dbReference type="WormBase" id="F26H11.2e">
    <molecule id="Q6BER5-5"/>
    <property type="protein sequence ID" value="CE15909"/>
    <property type="gene ID" value="WBGene00009180"/>
    <property type="gene designation" value="nurf-1"/>
</dbReference>
<dbReference type="WormBase" id="F26H11.2f">
    <molecule id="Q6BER5-6"/>
    <property type="protein sequence ID" value="CE15910"/>
    <property type="gene ID" value="WBGene00009180"/>
    <property type="gene designation" value="nurf-1"/>
</dbReference>
<dbReference type="eggNOG" id="KOG1473">
    <property type="taxonomic scope" value="Eukaryota"/>
</dbReference>
<dbReference type="eggNOG" id="KOG1632">
    <property type="taxonomic scope" value="Eukaryota"/>
</dbReference>
<dbReference type="HOGENOM" id="CLU_000284_0_0_1"/>
<dbReference type="InParanoid" id="Q6BER5"/>
<dbReference type="OMA" id="FEDFCTA"/>
<dbReference type="OrthoDB" id="784962at2759"/>
<dbReference type="SignaLink" id="Q6BER5"/>
<dbReference type="PRO" id="PR:Q6BER5"/>
<dbReference type="Proteomes" id="UP000001940">
    <property type="component" value="Chromosome II"/>
</dbReference>
<dbReference type="Bgee" id="WBGene00009180">
    <property type="expression patterns" value="Expressed in pharyngeal muscle cell (C elegans) and 4 other cell types or tissues"/>
</dbReference>
<dbReference type="ExpressionAtlas" id="Q6BER5">
    <property type="expression patterns" value="baseline and differential"/>
</dbReference>
<dbReference type="GO" id="GO:0016589">
    <property type="term" value="C:NURF complex"/>
    <property type="evidence" value="ECO:0000318"/>
    <property type="project" value="GO_Central"/>
</dbReference>
<dbReference type="GO" id="GO:0035064">
    <property type="term" value="F:methylated histone binding"/>
    <property type="evidence" value="ECO:0000318"/>
    <property type="project" value="GO_Central"/>
</dbReference>
<dbReference type="GO" id="GO:0000978">
    <property type="term" value="F:RNA polymerase II cis-regulatory region sequence-specific DNA binding"/>
    <property type="evidence" value="ECO:0000318"/>
    <property type="project" value="GO_Central"/>
</dbReference>
<dbReference type="GO" id="GO:0008270">
    <property type="term" value="F:zinc ion binding"/>
    <property type="evidence" value="ECO:0007669"/>
    <property type="project" value="UniProtKB-KW"/>
</dbReference>
<dbReference type="GO" id="GO:0006325">
    <property type="term" value="P:chromatin organization"/>
    <property type="evidence" value="ECO:0007669"/>
    <property type="project" value="UniProtKB-KW"/>
</dbReference>
<dbReference type="GO" id="GO:0045944">
    <property type="term" value="P:positive regulation of transcription by RNA polymerase II"/>
    <property type="evidence" value="ECO:0000315"/>
    <property type="project" value="WormBase"/>
</dbReference>
<dbReference type="GO" id="GO:0006357">
    <property type="term" value="P:regulation of transcription by RNA polymerase II"/>
    <property type="evidence" value="ECO:0000318"/>
    <property type="project" value="GO_Central"/>
</dbReference>
<dbReference type="CDD" id="cd05509">
    <property type="entry name" value="Bromo_gcn5_like"/>
    <property type="match status" value="1"/>
</dbReference>
<dbReference type="CDD" id="cd15560">
    <property type="entry name" value="PHD2_3_BPTF"/>
    <property type="match status" value="1"/>
</dbReference>
<dbReference type="Gene3D" id="1.20.920.10">
    <property type="entry name" value="Bromodomain-like"/>
    <property type="match status" value="1"/>
</dbReference>
<dbReference type="Gene3D" id="3.30.40.10">
    <property type="entry name" value="Zinc/RING finger domain, C3HC4 (zinc finger)"/>
    <property type="match status" value="3"/>
</dbReference>
<dbReference type="InterPro" id="IPR038028">
    <property type="entry name" value="BPTF"/>
</dbReference>
<dbReference type="InterPro" id="IPR001487">
    <property type="entry name" value="Bromodomain"/>
</dbReference>
<dbReference type="InterPro" id="IPR036427">
    <property type="entry name" value="Bromodomain-like_sf"/>
</dbReference>
<dbReference type="InterPro" id="IPR018501">
    <property type="entry name" value="DDT_dom"/>
</dbReference>
<dbReference type="InterPro" id="IPR028941">
    <property type="entry name" value="WHIM2_dom"/>
</dbReference>
<dbReference type="InterPro" id="IPR019786">
    <property type="entry name" value="Zinc_finger_PHD-type_CS"/>
</dbReference>
<dbReference type="InterPro" id="IPR011011">
    <property type="entry name" value="Znf_FYVE_PHD"/>
</dbReference>
<dbReference type="InterPro" id="IPR001965">
    <property type="entry name" value="Znf_PHD"/>
</dbReference>
<dbReference type="InterPro" id="IPR019787">
    <property type="entry name" value="Znf_PHD-finger"/>
</dbReference>
<dbReference type="InterPro" id="IPR013083">
    <property type="entry name" value="Znf_RING/FYVE/PHD"/>
</dbReference>
<dbReference type="PANTHER" id="PTHR45975">
    <property type="entry name" value="NUCLEOSOME-REMODELING FACTOR SUBUNIT BPTF"/>
    <property type="match status" value="1"/>
</dbReference>
<dbReference type="PANTHER" id="PTHR45975:SF2">
    <property type="entry name" value="NUCLEOSOME-REMODELING FACTOR SUBUNIT BPTF"/>
    <property type="match status" value="1"/>
</dbReference>
<dbReference type="Pfam" id="PF00439">
    <property type="entry name" value="Bromodomain"/>
    <property type="match status" value="1"/>
</dbReference>
<dbReference type="Pfam" id="PF02791">
    <property type="entry name" value="DDT"/>
    <property type="match status" value="1"/>
</dbReference>
<dbReference type="Pfam" id="PF00628">
    <property type="entry name" value="PHD"/>
    <property type="match status" value="2"/>
</dbReference>
<dbReference type="Pfam" id="PF15613">
    <property type="entry name" value="WSD"/>
    <property type="match status" value="1"/>
</dbReference>
<dbReference type="PRINTS" id="PR00503">
    <property type="entry name" value="BROMODOMAIN"/>
</dbReference>
<dbReference type="SMART" id="SM00297">
    <property type="entry name" value="BROMO"/>
    <property type="match status" value="1"/>
</dbReference>
<dbReference type="SMART" id="SM00571">
    <property type="entry name" value="DDT"/>
    <property type="match status" value="1"/>
</dbReference>
<dbReference type="SMART" id="SM00249">
    <property type="entry name" value="PHD"/>
    <property type="match status" value="3"/>
</dbReference>
<dbReference type="SUPFAM" id="SSF47370">
    <property type="entry name" value="Bromodomain"/>
    <property type="match status" value="1"/>
</dbReference>
<dbReference type="SUPFAM" id="SSF57903">
    <property type="entry name" value="FYVE/PHD zinc finger"/>
    <property type="match status" value="3"/>
</dbReference>
<dbReference type="PROSITE" id="PS50014">
    <property type="entry name" value="BROMODOMAIN_2"/>
    <property type="match status" value="1"/>
</dbReference>
<dbReference type="PROSITE" id="PS50827">
    <property type="entry name" value="DDT"/>
    <property type="match status" value="1"/>
</dbReference>
<dbReference type="PROSITE" id="PS01359">
    <property type="entry name" value="ZF_PHD_1"/>
    <property type="match status" value="3"/>
</dbReference>
<dbReference type="PROSITE" id="PS50016">
    <property type="entry name" value="ZF_PHD_2"/>
    <property type="match status" value="2"/>
</dbReference>
<keyword id="KW-0025">Alternative splicing</keyword>
<keyword id="KW-0103">Bromodomain</keyword>
<keyword id="KW-0156">Chromatin regulator</keyword>
<keyword id="KW-0175">Coiled coil</keyword>
<keyword id="KW-0217">Developmental protein</keyword>
<keyword id="KW-0479">Metal-binding</keyword>
<keyword id="KW-0539">Nucleus</keyword>
<keyword id="KW-1185">Reference proteome</keyword>
<keyword id="KW-0677">Repeat</keyword>
<keyword id="KW-0804">Transcription</keyword>
<keyword id="KW-0805">Transcription regulation</keyword>
<keyword id="KW-0862">Zinc</keyword>
<keyword id="KW-0863">Zinc-finger</keyword>
<evidence type="ECO:0000255" key="1"/>
<evidence type="ECO:0000255" key="2">
    <source>
        <dbReference type="PROSITE-ProRule" id="PRU00035"/>
    </source>
</evidence>
<evidence type="ECO:0000255" key="3">
    <source>
        <dbReference type="PROSITE-ProRule" id="PRU00063"/>
    </source>
</evidence>
<evidence type="ECO:0000255" key="4">
    <source>
        <dbReference type="PROSITE-ProRule" id="PRU00146"/>
    </source>
</evidence>
<evidence type="ECO:0000256" key="5">
    <source>
        <dbReference type="SAM" id="MobiDB-lite"/>
    </source>
</evidence>
<evidence type="ECO:0000269" key="6">
    <source>
    </source>
</evidence>
<evidence type="ECO:0000305" key="7"/>
<evidence type="ECO:0000305" key="8">
    <source>
    </source>
</evidence>
<gene>
    <name type="primary">nurf-1</name>
    <name type="ORF">F26H11.2</name>
</gene>
<reference key="1">
    <citation type="journal article" date="1998" name="Science">
        <title>Genome sequence of the nematode C. elegans: a platform for investigating biology.</title>
        <authorList>
            <consortium name="The C. elegans sequencing consortium"/>
        </authorList>
    </citation>
    <scope>NUCLEOTIDE SEQUENCE [LARGE SCALE GENOMIC DNA]</scope>
    <scope>ALTERNATIVE SPLICING</scope>
    <source>
        <strain>Bristol N2</strain>
    </source>
</reference>
<reference key="2">
    <citation type="journal article" date="2006" name="Development">
        <title>C. elegans ISWI and NURF301 antagonize an Rb-like pathway in the determination of multiple cell fates.</title>
        <authorList>
            <person name="Andersen E.C."/>
            <person name="Lu X."/>
            <person name="Horvitz H.R."/>
        </authorList>
    </citation>
    <scope>FUNCTION</scope>
    <scope>SUBUNIT</scope>
</reference>
<organism>
    <name type="scientific">Caenorhabditis elegans</name>
    <dbReference type="NCBI Taxonomy" id="6239"/>
    <lineage>
        <taxon>Eukaryota</taxon>
        <taxon>Metazoa</taxon>
        <taxon>Ecdysozoa</taxon>
        <taxon>Nematoda</taxon>
        <taxon>Chromadorea</taxon>
        <taxon>Rhabditida</taxon>
        <taxon>Rhabditina</taxon>
        <taxon>Rhabditomorpha</taxon>
        <taxon>Rhabditoidea</taxon>
        <taxon>Rhabditidae</taxon>
        <taxon>Peloderinae</taxon>
        <taxon>Caenorhabditis</taxon>
    </lineage>
</organism>
<protein>
    <recommendedName>
        <fullName>Nucleosome-remodeling factor subunit NURF301-like</fullName>
    </recommendedName>
</protein>
<proteinExistence type="evidence at protein level"/>
<accession>Q6BER5</accession>
<accession>B1Q274</accession>
<accession>O45407</accession>
<accession>O45409</accession>
<accession>O45410</accession>
<accession>Q5WRM3</accession>
<accession>Q95ZU8</accession>
<accession>Q9NLC1</accession>
<comment type="function">
    <text evidence="6 7">Histone-binding component of a NURF-like (nucleosome remodeling factor-like) complex, which would catalyze ATP-dependent nucleosome sliding and facilitate transcription of chromatin (Probable). Involved in vulval cell fates.</text>
</comment>
<comment type="subunit">
    <text evidence="8">Part of a nucleosome remodeling factor-like (NURF-like) complex containing nurf-1 and isw-1.</text>
</comment>
<comment type="subcellular location">
    <subcellularLocation>
        <location evidence="3">Nucleus</location>
    </subcellularLocation>
</comment>
<comment type="alternative products">
    <event type="alternative splicing"/>
    <isoform>
        <id>Q6BER5-1</id>
        <name>c</name>
        <sequence type="displayed"/>
    </isoform>
    <isoform>
        <id>Q6BER5-3</id>
        <name>a</name>
        <sequence type="described" ref="VSP_044204"/>
    </isoform>
    <isoform>
        <id>Q6BER5-2</id>
        <name>b</name>
        <sequence type="described" ref="VSP_020415 VSP_020418"/>
    </isoform>
    <isoform>
        <id>Q6BER5-4</id>
        <name>d</name>
        <sequence type="described" ref="VSP_020413"/>
    </isoform>
    <isoform>
        <id>Q6BER5-5</id>
        <name>e</name>
        <sequence type="described" ref="VSP_020410 VSP_020421"/>
    </isoform>
    <isoform>
        <id>Q6BER5-6</id>
        <name>f</name>
        <sequence type="described" ref="VSP_020411 VSP_020420"/>
    </isoform>
</comment>
<comment type="similarity">
    <text evidence="7">Belongs to the BPTF family.</text>
</comment>